<name>GRM6_RABIT</name>
<evidence type="ECO:0000250" key="1"/>
<evidence type="ECO:0000250" key="2">
    <source>
        <dbReference type="UniProtKB" id="O15303"/>
    </source>
</evidence>
<evidence type="ECO:0000250" key="3">
    <source>
        <dbReference type="UniProtKB" id="Q5NCH9"/>
    </source>
</evidence>
<evidence type="ECO:0000255" key="4"/>
<evidence type="ECO:0000256" key="5">
    <source>
        <dbReference type="SAM" id="MobiDB-lite"/>
    </source>
</evidence>
<evidence type="ECO:0000305" key="6"/>
<accession>Q863I4</accession>
<reference key="1">
    <citation type="submission" date="2003-04" db="EMBL/GenBank/DDBJ databases">
        <title>Cloning of mGluR6 in the rabbit retina.</title>
        <authorList>
            <person name="Keung J.W."/>
            <person name="Massey S.C."/>
        </authorList>
    </citation>
    <scope>NUCLEOTIDE SEQUENCE [MRNA]</scope>
    <source>
        <strain>New Zealand white</strain>
        <tissue>Retina</tissue>
    </source>
</reference>
<proteinExistence type="evidence at transcript level"/>
<protein>
    <recommendedName>
        <fullName>Metabotropic glutamate receptor 6</fullName>
        <shortName>mGluR6</shortName>
    </recommendedName>
</protein>
<dbReference type="EMBL" id="AY275542">
    <property type="protein sequence ID" value="AAP31684.1"/>
    <property type="molecule type" value="mRNA"/>
</dbReference>
<dbReference type="RefSeq" id="NP_001076204.1">
    <property type="nucleotide sequence ID" value="NM_001082735.1"/>
</dbReference>
<dbReference type="SMR" id="Q863I4"/>
<dbReference type="FunCoup" id="Q863I4">
    <property type="interactions" value="45"/>
</dbReference>
<dbReference type="STRING" id="9986.ENSOCUP00000014505"/>
<dbReference type="GlyCosmos" id="Q863I4">
    <property type="glycosylation" value="4 sites, No reported glycans"/>
</dbReference>
<dbReference type="PaxDb" id="9986-ENSOCUP00000014505"/>
<dbReference type="GeneID" id="100009501"/>
<dbReference type="KEGG" id="ocu:100009501"/>
<dbReference type="CTD" id="2916"/>
<dbReference type="eggNOG" id="KOG1056">
    <property type="taxonomic scope" value="Eukaryota"/>
</dbReference>
<dbReference type="InParanoid" id="Q863I4"/>
<dbReference type="OrthoDB" id="425344at2759"/>
<dbReference type="Proteomes" id="UP000001811">
    <property type="component" value="Unplaced"/>
</dbReference>
<dbReference type="GO" id="GO:0030425">
    <property type="term" value="C:dendrite"/>
    <property type="evidence" value="ECO:0007669"/>
    <property type="project" value="UniProtKB-SubCell"/>
</dbReference>
<dbReference type="GO" id="GO:0005789">
    <property type="term" value="C:endoplasmic reticulum membrane"/>
    <property type="evidence" value="ECO:0000250"/>
    <property type="project" value="UniProtKB"/>
</dbReference>
<dbReference type="GO" id="GO:0000139">
    <property type="term" value="C:Golgi membrane"/>
    <property type="evidence" value="ECO:0000250"/>
    <property type="project" value="UniProtKB"/>
</dbReference>
<dbReference type="GO" id="GO:0005886">
    <property type="term" value="C:plasma membrane"/>
    <property type="evidence" value="ECO:0000250"/>
    <property type="project" value="UniProtKB"/>
</dbReference>
<dbReference type="GO" id="GO:0004930">
    <property type="term" value="F:G protein-coupled receptor activity"/>
    <property type="evidence" value="ECO:0007669"/>
    <property type="project" value="UniProtKB-KW"/>
</dbReference>
<dbReference type="GO" id="GO:0008066">
    <property type="term" value="F:glutamate receptor activity"/>
    <property type="evidence" value="ECO:0000250"/>
    <property type="project" value="UniProtKB"/>
</dbReference>
<dbReference type="GO" id="GO:0050908">
    <property type="term" value="P:detection of light stimulus involved in visual perception"/>
    <property type="evidence" value="ECO:0000250"/>
    <property type="project" value="UniProtKB"/>
</dbReference>
<dbReference type="GO" id="GO:0007216">
    <property type="term" value="P:G protein-coupled glutamate receptor signaling pathway"/>
    <property type="evidence" value="ECO:0000250"/>
    <property type="project" value="UniProtKB"/>
</dbReference>
<dbReference type="GO" id="GO:1905665">
    <property type="term" value="P:positive regulation of calcium ion import across plasma membrane"/>
    <property type="evidence" value="ECO:0000250"/>
    <property type="project" value="UniProtKB"/>
</dbReference>
<dbReference type="CDD" id="cd06376">
    <property type="entry name" value="PBP1_mGluR_groupIII"/>
    <property type="match status" value="1"/>
</dbReference>
<dbReference type="FunFam" id="3.40.50.2300:FF:000009">
    <property type="entry name" value="Glutamate receptor, metabotropic 4"/>
    <property type="match status" value="1"/>
</dbReference>
<dbReference type="FunFam" id="2.10.50.30:FF:000001">
    <property type="entry name" value="metabotropic glutamate receptor 1"/>
    <property type="match status" value="1"/>
</dbReference>
<dbReference type="Gene3D" id="3.40.50.2300">
    <property type="match status" value="2"/>
</dbReference>
<dbReference type="Gene3D" id="2.10.50.30">
    <property type="entry name" value="GPCR, family 3, nine cysteines domain"/>
    <property type="match status" value="1"/>
</dbReference>
<dbReference type="InterPro" id="IPR001828">
    <property type="entry name" value="ANF_lig-bd_rcpt"/>
</dbReference>
<dbReference type="InterPro" id="IPR000337">
    <property type="entry name" value="GPCR_3"/>
</dbReference>
<dbReference type="InterPro" id="IPR011500">
    <property type="entry name" value="GPCR_3_9-Cys_dom"/>
</dbReference>
<dbReference type="InterPro" id="IPR038550">
    <property type="entry name" value="GPCR_3_9-Cys_sf"/>
</dbReference>
<dbReference type="InterPro" id="IPR000112">
    <property type="entry name" value="GPCR_3__mGluR6"/>
</dbReference>
<dbReference type="InterPro" id="IPR017978">
    <property type="entry name" value="GPCR_3_C"/>
</dbReference>
<dbReference type="InterPro" id="IPR017979">
    <property type="entry name" value="GPCR_3_CS"/>
</dbReference>
<dbReference type="InterPro" id="IPR000162">
    <property type="entry name" value="GPCR_3_mtglu_rcpt"/>
</dbReference>
<dbReference type="InterPro" id="IPR050726">
    <property type="entry name" value="mGluR"/>
</dbReference>
<dbReference type="InterPro" id="IPR028082">
    <property type="entry name" value="Peripla_BP_I"/>
</dbReference>
<dbReference type="PANTHER" id="PTHR24060">
    <property type="entry name" value="METABOTROPIC GLUTAMATE RECEPTOR"/>
    <property type="match status" value="1"/>
</dbReference>
<dbReference type="Pfam" id="PF00003">
    <property type="entry name" value="7tm_3"/>
    <property type="match status" value="1"/>
</dbReference>
<dbReference type="Pfam" id="PF01094">
    <property type="entry name" value="ANF_receptor"/>
    <property type="match status" value="1"/>
</dbReference>
<dbReference type="Pfam" id="PF07562">
    <property type="entry name" value="NCD3G"/>
    <property type="match status" value="1"/>
</dbReference>
<dbReference type="PRINTS" id="PR00248">
    <property type="entry name" value="GPCRMGR"/>
</dbReference>
<dbReference type="PRINTS" id="PR01056">
    <property type="entry name" value="MTABOTROPC6R"/>
</dbReference>
<dbReference type="PRINTS" id="PR00593">
    <property type="entry name" value="MTABOTROPICR"/>
</dbReference>
<dbReference type="SUPFAM" id="SSF53822">
    <property type="entry name" value="Periplasmic binding protein-like I"/>
    <property type="match status" value="1"/>
</dbReference>
<dbReference type="PROSITE" id="PS00979">
    <property type="entry name" value="G_PROTEIN_RECEP_F3_1"/>
    <property type="match status" value="1"/>
</dbReference>
<dbReference type="PROSITE" id="PS00980">
    <property type="entry name" value="G_PROTEIN_RECEP_F3_2"/>
    <property type="match status" value="1"/>
</dbReference>
<dbReference type="PROSITE" id="PS00981">
    <property type="entry name" value="G_PROTEIN_RECEP_F3_3"/>
    <property type="match status" value="1"/>
</dbReference>
<dbReference type="PROSITE" id="PS50259">
    <property type="entry name" value="G_PROTEIN_RECEP_F3_4"/>
    <property type="match status" value="1"/>
</dbReference>
<keyword id="KW-1003">Cell membrane</keyword>
<keyword id="KW-0966">Cell projection</keyword>
<keyword id="KW-1015">Disulfide bond</keyword>
<keyword id="KW-0256">Endoplasmic reticulum</keyword>
<keyword id="KW-0297">G-protein coupled receptor</keyword>
<keyword id="KW-0325">Glycoprotein</keyword>
<keyword id="KW-0333">Golgi apparatus</keyword>
<keyword id="KW-0472">Membrane</keyword>
<keyword id="KW-0675">Receptor</keyword>
<keyword id="KW-1185">Reference proteome</keyword>
<keyword id="KW-0716">Sensory transduction</keyword>
<keyword id="KW-0732">Signal</keyword>
<keyword id="KW-0807">Transducer</keyword>
<keyword id="KW-0812">Transmembrane</keyword>
<keyword id="KW-1133">Transmembrane helix</keyword>
<keyword id="KW-0844">Vision</keyword>
<organism>
    <name type="scientific">Oryctolagus cuniculus</name>
    <name type="common">Rabbit</name>
    <dbReference type="NCBI Taxonomy" id="9986"/>
    <lineage>
        <taxon>Eukaryota</taxon>
        <taxon>Metazoa</taxon>
        <taxon>Chordata</taxon>
        <taxon>Craniata</taxon>
        <taxon>Vertebrata</taxon>
        <taxon>Euteleostomi</taxon>
        <taxon>Mammalia</taxon>
        <taxon>Eutheria</taxon>
        <taxon>Euarchontoglires</taxon>
        <taxon>Glires</taxon>
        <taxon>Lagomorpha</taxon>
        <taxon>Leporidae</taxon>
        <taxon>Oryctolagus</taxon>
    </lineage>
</organism>
<comment type="function">
    <text evidence="1">G-protein coupled receptor for glutamate. Ligand binding causes a conformation change that triggers signaling via guanine nucleotide-binding proteins (G proteins) and modulates the activity of down-stream effectors, such as adenylate cyclase. Signaling inhibits adenylate cyclase activity (By similarity). Signaling stimulates TRPM1 channel activity and Ca(2+) uptake. Required for normal vision.</text>
</comment>
<comment type="subunit">
    <text evidence="2 3">Homodimer (By similarity). Interacts with GPR179 (By similarity). Interacts with photoreceptor synaptic protein LRIT1 (via its N-terminal extracellular domain) (By similarity).</text>
</comment>
<comment type="subcellular location">
    <subcellularLocation>
        <location evidence="1">Cell membrane</location>
        <topology evidence="1">Multi-pass membrane protein</topology>
    </subcellularLocation>
    <subcellularLocation>
        <location evidence="1">Endoplasmic reticulum membrane</location>
        <topology evidence="1">Multi-pass membrane protein</topology>
    </subcellularLocation>
    <subcellularLocation>
        <location evidence="1">Golgi apparatus membrane</location>
        <topology evidence="1">Multi-pass membrane protein</topology>
    </subcellularLocation>
    <subcellularLocation>
        <location evidence="1">Cell projection</location>
        <location evidence="1">Dendrite</location>
    </subcellularLocation>
    <text evidence="1">Subject to trafficking from the endoplasmic reticulum to the Golgi apparatus and then to the cell membrane. Detected at dendritic tips of bipolar cells (By similarity).</text>
</comment>
<comment type="similarity">
    <text evidence="6">Belongs to the G-protein coupled receptor 3 family.</text>
</comment>
<sequence length="868" mass="94469">MARLLLALLAWLAQMSPVRAAGSVRLAGGLTLGGLFPVHARGAAGRACGQLKKEQGVHRLEAMLYALDRVNADPELLPGVRLGARLLDTCSRDTYALEQALSFVQALIRGRGDGDEAAVRCPGGVPPLRAAPPERVVAVVGASASSVSIMVANVLRLFAIPQISYASTAPELSDSTRYDFFSRVVPPDSYQAQAMVDIVRALGWNYVSTLASEGNYGESGVEAFVQISREAGGVCIAQSIKIPREPKPGEFNKVIKRLMETPNARGIIIFANEDDIRRVLEATRQANLTGHFLWVGSDSWGSKTSPVLSLEDVAVGAITILPKRASIDGFDQYFMTRSLENNRRNIWFAEFWEENFNCKLTSSGGQSDEATRKCTGEERIGQDSAYEQEGKVQFVIDAVYAIAHALHSMHQALCPGYTGLCPAMEPTDGRTLLQYIRAVRFNGSAGTPVMFNENGDAPGRYDIFQYQATNGSASSGGYQVVGQWAEALRLDVEALQWSGDPHEVPPSQCSLPCGPGERKKMVKGVPCCWHCEACDGYRFQVDEFTCEACPRDMRPTPNHTGCRPTPVVRLTWSSPWAAPPLLLAVLGIMATTTVVGTFVRHNNTPIVRASGRELSYVLLTGIFLIYAVTFLMVAEPGAAVCATRRLFLGLGTTLSYSALLTKTNRIYRIFEQGKRSVTPPPFISPTSQLVITFSLTSLQVVGVIAWLGAQPPHSVIDYEEQRTVDPEQARGVLKCDMSDLSLIGCLGYSLLLMVTCTVYAIKARGVPETFNEAKPIGFTMYTTCIVWLAFVPIFFGTAQSAEKIYIQTTTLTVSLSLSASVSLGMLYVPKTYVILFHPEQNVQKRKRSLKTTSTVAAPPKGADTEDPK</sequence>
<gene>
    <name type="primary">GRM6</name>
</gene>
<feature type="signal peptide" evidence="4">
    <location>
        <begin position="1"/>
        <end position="20"/>
    </location>
</feature>
<feature type="chain" id="PRO_0000012936" description="Metabotropic glutamate receptor 6">
    <location>
        <begin position="21"/>
        <end position="868"/>
    </location>
</feature>
<feature type="topological domain" description="Extracellular" evidence="4">
    <location>
        <begin position="21"/>
        <end position="576"/>
    </location>
</feature>
<feature type="transmembrane region" description="Helical; Name=1" evidence="4">
    <location>
        <begin position="577"/>
        <end position="599"/>
    </location>
</feature>
<feature type="topological domain" description="Cytoplasmic" evidence="4">
    <location>
        <begin position="600"/>
        <end position="613"/>
    </location>
</feature>
<feature type="transmembrane region" description="Helical; Name=2" evidence="4">
    <location>
        <begin position="614"/>
        <end position="634"/>
    </location>
</feature>
<feature type="topological domain" description="Extracellular" evidence="4">
    <location>
        <begin position="635"/>
        <end position="645"/>
    </location>
</feature>
<feature type="transmembrane region" description="Helical; Name=3" evidence="4">
    <location>
        <begin position="646"/>
        <end position="664"/>
    </location>
</feature>
<feature type="topological domain" description="Cytoplasmic" evidence="4">
    <location>
        <begin position="665"/>
        <end position="688"/>
    </location>
</feature>
<feature type="transmembrane region" description="Helical; Name=4" evidence="4">
    <location>
        <begin position="689"/>
        <end position="709"/>
    </location>
</feature>
<feature type="topological domain" description="Extracellular" evidence="4">
    <location>
        <begin position="710"/>
        <end position="739"/>
    </location>
</feature>
<feature type="transmembrane region" description="Helical; Name=5" evidence="4">
    <location>
        <begin position="740"/>
        <end position="761"/>
    </location>
</feature>
<feature type="topological domain" description="Cytoplasmic" evidence="4">
    <location>
        <begin position="762"/>
        <end position="774"/>
    </location>
</feature>
<feature type="transmembrane region" description="Helical; Name=6" evidence="4">
    <location>
        <begin position="775"/>
        <end position="797"/>
    </location>
</feature>
<feature type="topological domain" description="Extracellular" evidence="4">
    <location>
        <begin position="798"/>
        <end position="810"/>
    </location>
</feature>
<feature type="transmembrane region" description="Helical; Name=7" evidence="4">
    <location>
        <begin position="811"/>
        <end position="836"/>
    </location>
</feature>
<feature type="topological domain" description="Cytoplasmic" evidence="4">
    <location>
        <begin position="837"/>
        <end position="868"/>
    </location>
</feature>
<feature type="region of interest" description="Disordered" evidence="5">
    <location>
        <begin position="845"/>
        <end position="868"/>
    </location>
</feature>
<feature type="binding site" evidence="1">
    <location>
        <position position="145"/>
    </location>
    <ligand>
        <name>L-glutamate</name>
        <dbReference type="ChEBI" id="CHEBI:29985"/>
    </ligand>
</feature>
<feature type="binding site" evidence="1">
    <location>
        <begin position="166"/>
        <end position="168"/>
    </location>
    <ligand>
        <name>L-glutamate</name>
        <dbReference type="ChEBI" id="CHEBI:29985"/>
    </ligand>
</feature>
<feature type="binding site" evidence="1">
    <location>
        <position position="216"/>
    </location>
    <ligand>
        <name>L-glutamate</name>
        <dbReference type="ChEBI" id="CHEBI:29985"/>
    </ligand>
</feature>
<feature type="binding site" evidence="1">
    <location>
        <position position="298"/>
    </location>
    <ligand>
        <name>L-glutamate</name>
        <dbReference type="ChEBI" id="CHEBI:29985"/>
    </ligand>
</feature>
<feature type="binding site" evidence="1">
    <location>
        <position position="391"/>
    </location>
    <ligand>
        <name>L-glutamate</name>
        <dbReference type="ChEBI" id="CHEBI:29985"/>
    </ligand>
</feature>
<feature type="glycosylation site" description="N-linked (GlcNAc...) asparagine" evidence="4">
    <location>
        <position position="287"/>
    </location>
</feature>
<feature type="glycosylation site" description="N-linked (GlcNAc...) asparagine" evidence="4">
    <location>
        <position position="442"/>
    </location>
</feature>
<feature type="glycosylation site" description="N-linked (GlcNAc...) asparagine" evidence="4">
    <location>
        <position position="470"/>
    </location>
</feature>
<feature type="glycosylation site" description="N-linked (GlcNAc...) asparagine" evidence="4">
    <location>
        <position position="558"/>
    </location>
</feature>
<feature type="disulfide bond" evidence="1">
    <location>
        <begin position="48"/>
        <end position="90"/>
    </location>
</feature>
<feature type="disulfide bond" evidence="1">
    <location>
        <begin position="235"/>
        <end position="527"/>
    </location>
</feature>
<feature type="disulfide bond" evidence="1">
    <location>
        <begin position="358"/>
        <end position="374"/>
    </location>
</feature>
<feature type="disulfide bond" evidence="1">
    <location>
        <begin position="414"/>
        <end position="421"/>
    </location>
</feature>
<feature type="disulfide bond" evidence="1">
    <location>
        <begin position="509"/>
        <end position="528"/>
    </location>
</feature>
<feature type="disulfide bond" evidence="1">
    <location>
        <begin position="513"/>
        <end position="531"/>
    </location>
</feature>
<feature type="disulfide bond" evidence="1">
    <location>
        <begin position="534"/>
        <end position="546"/>
    </location>
</feature>
<feature type="disulfide bond" evidence="1">
    <location>
        <begin position="549"/>
        <end position="562"/>
    </location>
</feature>